<organism>
    <name type="scientific">Salmonella arizonae (strain ATCC BAA-731 / CDC346-86 / RSK2980)</name>
    <dbReference type="NCBI Taxonomy" id="41514"/>
    <lineage>
        <taxon>Bacteria</taxon>
        <taxon>Pseudomonadati</taxon>
        <taxon>Pseudomonadota</taxon>
        <taxon>Gammaproteobacteria</taxon>
        <taxon>Enterobacterales</taxon>
        <taxon>Enterobacteriaceae</taxon>
        <taxon>Salmonella</taxon>
    </lineage>
</organism>
<proteinExistence type="inferred from homology"/>
<reference key="1">
    <citation type="submission" date="2007-11" db="EMBL/GenBank/DDBJ databases">
        <authorList>
            <consortium name="The Salmonella enterica serovar Arizonae Genome Sequencing Project"/>
            <person name="McClelland M."/>
            <person name="Sanderson E.K."/>
            <person name="Porwollik S."/>
            <person name="Spieth J."/>
            <person name="Clifton W.S."/>
            <person name="Fulton R."/>
            <person name="Chunyan W."/>
            <person name="Wollam A."/>
            <person name="Shah N."/>
            <person name="Pepin K."/>
            <person name="Bhonagiri V."/>
            <person name="Nash W."/>
            <person name="Johnson M."/>
            <person name="Thiruvilangam P."/>
            <person name="Wilson R."/>
        </authorList>
    </citation>
    <scope>NUCLEOTIDE SEQUENCE [LARGE SCALE GENOMIC DNA]</scope>
    <source>
        <strain>ATCC BAA-731 / CDC346-86 / RSK2980</strain>
    </source>
</reference>
<sequence>MSKRRLAPLTFLRRLLFRTLVALVVFWGGGIALFSVVPVPFSAVMAERQISAWLSGEFGYVAHSDWVSMEDISPWMGLAVMAAEDQKFPEHWGFDVLAIEKALAHNERNESRIRGASTLSQQTVKNLFLWDGRSWVRKGLEAGLTLGIETVWSKKRILTVYLNIAEFGDGIFGVEAAARRYFNKPASRLNMTEAALLAAVLPNPLRYKADAPSGYVRSRQSWILRQMRQLGGESFMTRNQLY</sequence>
<feature type="chain" id="PRO_1000083542" description="Biosynthetic peptidoglycan transglycosylase">
    <location>
        <begin position="1"/>
        <end position="242"/>
    </location>
</feature>
<feature type="transmembrane region" description="Helical" evidence="1">
    <location>
        <begin position="21"/>
        <end position="41"/>
    </location>
</feature>
<keyword id="KW-0997">Cell inner membrane</keyword>
<keyword id="KW-1003">Cell membrane</keyword>
<keyword id="KW-0133">Cell shape</keyword>
<keyword id="KW-0961">Cell wall biogenesis/degradation</keyword>
<keyword id="KW-0328">Glycosyltransferase</keyword>
<keyword id="KW-0472">Membrane</keyword>
<keyword id="KW-0573">Peptidoglycan synthesis</keyword>
<keyword id="KW-1185">Reference proteome</keyword>
<keyword id="KW-0808">Transferase</keyword>
<keyword id="KW-0812">Transmembrane</keyword>
<keyword id="KW-1133">Transmembrane helix</keyword>
<gene>
    <name evidence="1" type="primary">mtgA</name>
    <name type="ordered locus">SARI_04299</name>
</gene>
<name>MTGA_SALAR</name>
<dbReference type="EC" id="2.4.99.28" evidence="1"/>
<dbReference type="EMBL" id="CP000880">
    <property type="protein sequence ID" value="ABX24081.1"/>
    <property type="molecule type" value="Genomic_DNA"/>
</dbReference>
<dbReference type="SMR" id="A9MNZ9"/>
<dbReference type="STRING" id="41514.SARI_04299"/>
<dbReference type="CAZy" id="GT51">
    <property type="family name" value="Glycosyltransferase Family 51"/>
</dbReference>
<dbReference type="KEGG" id="ses:SARI_04299"/>
<dbReference type="HOGENOM" id="CLU_006354_1_1_6"/>
<dbReference type="UniPathway" id="UPA00219"/>
<dbReference type="Proteomes" id="UP000002084">
    <property type="component" value="Chromosome"/>
</dbReference>
<dbReference type="GO" id="GO:0009274">
    <property type="term" value="C:peptidoglycan-based cell wall"/>
    <property type="evidence" value="ECO:0007669"/>
    <property type="project" value="InterPro"/>
</dbReference>
<dbReference type="GO" id="GO:0005886">
    <property type="term" value="C:plasma membrane"/>
    <property type="evidence" value="ECO:0007669"/>
    <property type="project" value="UniProtKB-SubCell"/>
</dbReference>
<dbReference type="GO" id="GO:0016763">
    <property type="term" value="F:pentosyltransferase activity"/>
    <property type="evidence" value="ECO:0007669"/>
    <property type="project" value="InterPro"/>
</dbReference>
<dbReference type="GO" id="GO:0008955">
    <property type="term" value="F:peptidoglycan glycosyltransferase activity"/>
    <property type="evidence" value="ECO:0007669"/>
    <property type="project" value="UniProtKB-UniRule"/>
</dbReference>
<dbReference type="GO" id="GO:0071555">
    <property type="term" value="P:cell wall organization"/>
    <property type="evidence" value="ECO:0007669"/>
    <property type="project" value="UniProtKB-KW"/>
</dbReference>
<dbReference type="GO" id="GO:0009252">
    <property type="term" value="P:peptidoglycan biosynthetic process"/>
    <property type="evidence" value="ECO:0007669"/>
    <property type="project" value="UniProtKB-UniRule"/>
</dbReference>
<dbReference type="GO" id="GO:0008360">
    <property type="term" value="P:regulation of cell shape"/>
    <property type="evidence" value="ECO:0007669"/>
    <property type="project" value="UniProtKB-KW"/>
</dbReference>
<dbReference type="Gene3D" id="1.10.3810.10">
    <property type="entry name" value="Biosynthetic peptidoglycan transglycosylase-like"/>
    <property type="match status" value="1"/>
</dbReference>
<dbReference type="HAMAP" id="MF_00766">
    <property type="entry name" value="PGT_MtgA"/>
    <property type="match status" value="1"/>
</dbReference>
<dbReference type="InterPro" id="IPR001264">
    <property type="entry name" value="Glyco_trans_51"/>
</dbReference>
<dbReference type="InterPro" id="IPR023346">
    <property type="entry name" value="Lysozyme-like_dom_sf"/>
</dbReference>
<dbReference type="InterPro" id="IPR036950">
    <property type="entry name" value="PBP_transglycosylase"/>
</dbReference>
<dbReference type="InterPro" id="IPR011812">
    <property type="entry name" value="Pep_trsgly"/>
</dbReference>
<dbReference type="NCBIfam" id="TIGR02070">
    <property type="entry name" value="mono_pep_trsgly"/>
    <property type="match status" value="1"/>
</dbReference>
<dbReference type="PANTHER" id="PTHR30400:SF0">
    <property type="entry name" value="BIOSYNTHETIC PEPTIDOGLYCAN TRANSGLYCOSYLASE"/>
    <property type="match status" value="1"/>
</dbReference>
<dbReference type="PANTHER" id="PTHR30400">
    <property type="entry name" value="MONOFUNCTIONAL BIOSYNTHETIC PEPTIDOGLYCAN TRANSGLYCOSYLASE"/>
    <property type="match status" value="1"/>
</dbReference>
<dbReference type="Pfam" id="PF00912">
    <property type="entry name" value="Transgly"/>
    <property type="match status" value="1"/>
</dbReference>
<dbReference type="SUPFAM" id="SSF53955">
    <property type="entry name" value="Lysozyme-like"/>
    <property type="match status" value="1"/>
</dbReference>
<comment type="function">
    <text evidence="1">Peptidoglycan polymerase that catalyzes glycan chain elongation from lipid-linked precursors.</text>
</comment>
<comment type="catalytic activity">
    <reaction evidence="1">
        <text>[GlcNAc-(1-&gt;4)-Mur2Ac(oyl-L-Ala-gamma-D-Glu-L-Lys-D-Ala-D-Ala)](n)-di-trans,octa-cis-undecaprenyl diphosphate + beta-D-GlcNAc-(1-&gt;4)-Mur2Ac(oyl-L-Ala-gamma-D-Glu-L-Lys-D-Ala-D-Ala)-di-trans,octa-cis-undecaprenyl diphosphate = [GlcNAc-(1-&gt;4)-Mur2Ac(oyl-L-Ala-gamma-D-Glu-L-Lys-D-Ala-D-Ala)](n+1)-di-trans,octa-cis-undecaprenyl diphosphate + di-trans,octa-cis-undecaprenyl diphosphate + H(+)</text>
        <dbReference type="Rhea" id="RHEA:23708"/>
        <dbReference type="Rhea" id="RHEA-COMP:9602"/>
        <dbReference type="Rhea" id="RHEA-COMP:9603"/>
        <dbReference type="ChEBI" id="CHEBI:15378"/>
        <dbReference type="ChEBI" id="CHEBI:58405"/>
        <dbReference type="ChEBI" id="CHEBI:60033"/>
        <dbReference type="ChEBI" id="CHEBI:78435"/>
        <dbReference type="EC" id="2.4.99.28"/>
    </reaction>
</comment>
<comment type="pathway">
    <text evidence="1">Cell wall biogenesis; peptidoglycan biosynthesis.</text>
</comment>
<comment type="subcellular location">
    <subcellularLocation>
        <location evidence="1">Cell inner membrane</location>
        <topology evidence="1">Single-pass membrane protein</topology>
    </subcellularLocation>
</comment>
<comment type="similarity">
    <text evidence="1">Belongs to the glycosyltransferase 51 family.</text>
</comment>
<accession>A9MNZ9</accession>
<evidence type="ECO:0000255" key="1">
    <source>
        <dbReference type="HAMAP-Rule" id="MF_00766"/>
    </source>
</evidence>
<protein>
    <recommendedName>
        <fullName evidence="1">Biosynthetic peptidoglycan transglycosylase</fullName>
        <ecNumber evidence="1">2.4.99.28</ecNumber>
    </recommendedName>
    <alternativeName>
        <fullName evidence="1">Glycan polymerase</fullName>
    </alternativeName>
    <alternativeName>
        <fullName evidence="1">Peptidoglycan glycosyltransferase MtgA</fullName>
        <shortName evidence="1">PGT</shortName>
    </alternativeName>
</protein>